<gene>
    <name evidence="1" type="primary">era</name>
    <name type="ordered locus">VV2830</name>
</gene>
<proteinExistence type="inferred from homology"/>
<dbReference type="EMBL" id="BA000037">
    <property type="protein sequence ID" value="BAC95594.1"/>
    <property type="molecule type" value="Genomic_DNA"/>
</dbReference>
<dbReference type="RefSeq" id="WP_011079501.1">
    <property type="nucleotide sequence ID" value="NC_005139.1"/>
</dbReference>
<dbReference type="SMR" id="Q7MHN9"/>
<dbReference type="STRING" id="672.VV93_v1c25390"/>
<dbReference type="GeneID" id="93895823"/>
<dbReference type="KEGG" id="vvy:VV2830"/>
<dbReference type="eggNOG" id="COG1159">
    <property type="taxonomic scope" value="Bacteria"/>
</dbReference>
<dbReference type="HOGENOM" id="CLU_038009_1_2_6"/>
<dbReference type="Proteomes" id="UP000002675">
    <property type="component" value="Chromosome I"/>
</dbReference>
<dbReference type="GO" id="GO:0005829">
    <property type="term" value="C:cytosol"/>
    <property type="evidence" value="ECO:0007669"/>
    <property type="project" value="TreeGrafter"/>
</dbReference>
<dbReference type="GO" id="GO:0005886">
    <property type="term" value="C:plasma membrane"/>
    <property type="evidence" value="ECO:0007669"/>
    <property type="project" value="UniProtKB-SubCell"/>
</dbReference>
<dbReference type="GO" id="GO:0005525">
    <property type="term" value="F:GTP binding"/>
    <property type="evidence" value="ECO:0007669"/>
    <property type="project" value="UniProtKB-UniRule"/>
</dbReference>
<dbReference type="GO" id="GO:0003924">
    <property type="term" value="F:GTPase activity"/>
    <property type="evidence" value="ECO:0007669"/>
    <property type="project" value="UniProtKB-UniRule"/>
</dbReference>
<dbReference type="GO" id="GO:0043024">
    <property type="term" value="F:ribosomal small subunit binding"/>
    <property type="evidence" value="ECO:0007669"/>
    <property type="project" value="TreeGrafter"/>
</dbReference>
<dbReference type="GO" id="GO:0070181">
    <property type="term" value="F:small ribosomal subunit rRNA binding"/>
    <property type="evidence" value="ECO:0007669"/>
    <property type="project" value="UniProtKB-UniRule"/>
</dbReference>
<dbReference type="GO" id="GO:0000028">
    <property type="term" value="P:ribosomal small subunit assembly"/>
    <property type="evidence" value="ECO:0007669"/>
    <property type="project" value="TreeGrafter"/>
</dbReference>
<dbReference type="CDD" id="cd04163">
    <property type="entry name" value="Era"/>
    <property type="match status" value="1"/>
</dbReference>
<dbReference type="CDD" id="cd22534">
    <property type="entry name" value="KH-II_Era"/>
    <property type="match status" value="1"/>
</dbReference>
<dbReference type="FunFam" id="3.30.300.20:FF:000003">
    <property type="entry name" value="GTPase Era"/>
    <property type="match status" value="1"/>
</dbReference>
<dbReference type="FunFam" id="3.40.50.300:FF:000094">
    <property type="entry name" value="GTPase Era"/>
    <property type="match status" value="1"/>
</dbReference>
<dbReference type="Gene3D" id="3.30.300.20">
    <property type="match status" value="1"/>
</dbReference>
<dbReference type="Gene3D" id="3.40.50.300">
    <property type="entry name" value="P-loop containing nucleotide triphosphate hydrolases"/>
    <property type="match status" value="1"/>
</dbReference>
<dbReference type="HAMAP" id="MF_00367">
    <property type="entry name" value="GTPase_Era"/>
    <property type="match status" value="1"/>
</dbReference>
<dbReference type="InterPro" id="IPR030388">
    <property type="entry name" value="G_ERA_dom"/>
</dbReference>
<dbReference type="InterPro" id="IPR006073">
    <property type="entry name" value="GTP-bd"/>
</dbReference>
<dbReference type="InterPro" id="IPR005662">
    <property type="entry name" value="GTPase_Era-like"/>
</dbReference>
<dbReference type="InterPro" id="IPR015946">
    <property type="entry name" value="KH_dom-like_a/b"/>
</dbReference>
<dbReference type="InterPro" id="IPR004044">
    <property type="entry name" value="KH_dom_type_2"/>
</dbReference>
<dbReference type="InterPro" id="IPR009019">
    <property type="entry name" value="KH_sf_prok-type"/>
</dbReference>
<dbReference type="InterPro" id="IPR027417">
    <property type="entry name" value="P-loop_NTPase"/>
</dbReference>
<dbReference type="InterPro" id="IPR005225">
    <property type="entry name" value="Small_GTP-bd"/>
</dbReference>
<dbReference type="NCBIfam" id="TIGR00436">
    <property type="entry name" value="era"/>
    <property type="match status" value="1"/>
</dbReference>
<dbReference type="NCBIfam" id="NF000908">
    <property type="entry name" value="PRK00089.1"/>
    <property type="match status" value="1"/>
</dbReference>
<dbReference type="NCBIfam" id="TIGR00231">
    <property type="entry name" value="small_GTP"/>
    <property type="match status" value="1"/>
</dbReference>
<dbReference type="PANTHER" id="PTHR42698">
    <property type="entry name" value="GTPASE ERA"/>
    <property type="match status" value="1"/>
</dbReference>
<dbReference type="PANTHER" id="PTHR42698:SF1">
    <property type="entry name" value="GTPASE ERA, MITOCHONDRIAL"/>
    <property type="match status" value="1"/>
</dbReference>
<dbReference type="Pfam" id="PF07650">
    <property type="entry name" value="KH_2"/>
    <property type="match status" value="1"/>
</dbReference>
<dbReference type="Pfam" id="PF01926">
    <property type="entry name" value="MMR_HSR1"/>
    <property type="match status" value="1"/>
</dbReference>
<dbReference type="SUPFAM" id="SSF52540">
    <property type="entry name" value="P-loop containing nucleoside triphosphate hydrolases"/>
    <property type="match status" value="1"/>
</dbReference>
<dbReference type="SUPFAM" id="SSF54814">
    <property type="entry name" value="Prokaryotic type KH domain (KH-domain type II)"/>
    <property type="match status" value="1"/>
</dbReference>
<dbReference type="PROSITE" id="PS51713">
    <property type="entry name" value="G_ERA"/>
    <property type="match status" value="1"/>
</dbReference>
<dbReference type="PROSITE" id="PS50823">
    <property type="entry name" value="KH_TYPE_2"/>
    <property type="match status" value="1"/>
</dbReference>
<sequence length="320" mass="36679">MADNEFDIDAFFSTEKKSTSSENQHCGFIAIVGRPNVGKSTLLNKILGQKISITSRKPQTTRHRIMGVDTDGDYQAIYVDTPGLHIEEKRAINRLMNRAANSSLSDVNLVFFLVDGTHWTNDDEMVLNKLQKANFPVVLCVNKVDNVQDRNEVMQHMMEMSKKMNFVDVVPISAKQGKNIDVLRKHVRDHLPKAVHHFPEEYVTDRSQRFMASEIVREKLMRFTGDELPYSVTVEIERFDYNPETDGFHINALILVERSGQKKMVIGKGGEKIKTIGREARLDMEELFGRKVYLETWVKVKSGWADDERALRSLGYIDDL</sequence>
<accession>Q7MHN9</accession>
<evidence type="ECO:0000255" key="1">
    <source>
        <dbReference type="HAMAP-Rule" id="MF_00367"/>
    </source>
</evidence>
<evidence type="ECO:0000255" key="2">
    <source>
        <dbReference type="PROSITE-ProRule" id="PRU01050"/>
    </source>
</evidence>
<organism>
    <name type="scientific">Vibrio vulnificus (strain YJ016)</name>
    <dbReference type="NCBI Taxonomy" id="196600"/>
    <lineage>
        <taxon>Bacteria</taxon>
        <taxon>Pseudomonadati</taxon>
        <taxon>Pseudomonadota</taxon>
        <taxon>Gammaproteobacteria</taxon>
        <taxon>Vibrionales</taxon>
        <taxon>Vibrionaceae</taxon>
        <taxon>Vibrio</taxon>
    </lineage>
</organism>
<keyword id="KW-0997">Cell inner membrane</keyword>
<keyword id="KW-1003">Cell membrane</keyword>
<keyword id="KW-0963">Cytoplasm</keyword>
<keyword id="KW-0342">GTP-binding</keyword>
<keyword id="KW-0472">Membrane</keyword>
<keyword id="KW-0547">Nucleotide-binding</keyword>
<keyword id="KW-0690">Ribosome biogenesis</keyword>
<keyword id="KW-0694">RNA-binding</keyword>
<keyword id="KW-0699">rRNA-binding</keyword>
<name>ERA_VIBVY</name>
<feature type="chain" id="PRO_0000180073" description="GTPase Era">
    <location>
        <begin position="1"/>
        <end position="320"/>
    </location>
</feature>
<feature type="domain" description="Era-type G" evidence="2">
    <location>
        <begin position="25"/>
        <end position="193"/>
    </location>
</feature>
<feature type="domain" description="KH type-2" evidence="1">
    <location>
        <begin position="216"/>
        <end position="302"/>
    </location>
</feature>
<feature type="region of interest" description="G1" evidence="2">
    <location>
        <begin position="33"/>
        <end position="40"/>
    </location>
</feature>
<feature type="region of interest" description="G2" evidence="2">
    <location>
        <begin position="59"/>
        <end position="63"/>
    </location>
</feature>
<feature type="region of interest" description="G3" evidence="2">
    <location>
        <begin position="80"/>
        <end position="83"/>
    </location>
</feature>
<feature type="region of interest" description="G4" evidence="2">
    <location>
        <begin position="142"/>
        <end position="145"/>
    </location>
</feature>
<feature type="region of interest" description="G5" evidence="2">
    <location>
        <begin position="172"/>
        <end position="174"/>
    </location>
</feature>
<feature type="binding site" evidence="1">
    <location>
        <begin position="33"/>
        <end position="40"/>
    </location>
    <ligand>
        <name>GTP</name>
        <dbReference type="ChEBI" id="CHEBI:37565"/>
    </ligand>
</feature>
<feature type="binding site" evidence="1">
    <location>
        <begin position="80"/>
        <end position="84"/>
    </location>
    <ligand>
        <name>GTP</name>
        <dbReference type="ChEBI" id="CHEBI:37565"/>
    </ligand>
</feature>
<feature type="binding site" evidence="1">
    <location>
        <begin position="142"/>
        <end position="145"/>
    </location>
    <ligand>
        <name>GTP</name>
        <dbReference type="ChEBI" id="CHEBI:37565"/>
    </ligand>
</feature>
<protein>
    <recommendedName>
        <fullName evidence="1">GTPase Era</fullName>
    </recommendedName>
</protein>
<comment type="function">
    <text evidence="1">An essential GTPase that binds both GDP and GTP, with rapid nucleotide exchange. Plays a role in 16S rRNA processing and 30S ribosomal subunit biogenesis and possibly also in cell cycle regulation and energy metabolism.</text>
</comment>
<comment type="subunit">
    <text evidence="1">Monomer.</text>
</comment>
<comment type="subcellular location">
    <subcellularLocation>
        <location>Cytoplasm</location>
    </subcellularLocation>
    <subcellularLocation>
        <location evidence="1">Cell inner membrane</location>
        <topology evidence="1">Peripheral membrane protein</topology>
    </subcellularLocation>
</comment>
<comment type="similarity">
    <text evidence="1 2">Belongs to the TRAFAC class TrmE-Era-EngA-EngB-Septin-like GTPase superfamily. Era GTPase family.</text>
</comment>
<reference key="1">
    <citation type="journal article" date="2003" name="Genome Res.">
        <title>Comparative genome analysis of Vibrio vulnificus, a marine pathogen.</title>
        <authorList>
            <person name="Chen C.-Y."/>
            <person name="Wu K.-M."/>
            <person name="Chang Y.-C."/>
            <person name="Chang C.-H."/>
            <person name="Tsai H.-C."/>
            <person name="Liao T.-L."/>
            <person name="Liu Y.-M."/>
            <person name="Chen H.-J."/>
            <person name="Shen A.B.-T."/>
            <person name="Li J.-C."/>
            <person name="Su T.-L."/>
            <person name="Shao C.-P."/>
            <person name="Lee C.-T."/>
            <person name="Hor L.-I."/>
            <person name="Tsai S.-F."/>
        </authorList>
    </citation>
    <scope>NUCLEOTIDE SEQUENCE [LARGE SCALE GENOMIC DNA]</scope>
    <source>
        <strain>YJ016</strain>
    </source>
</reference>